<dbReference type="EC" id="5.4.2.11" evidence="1"/>
<dbReference type="EMBL" id="CP000920">
    <property type="protein sequence ID" value="ACO21602.1"/>
    <property type="molecule type" value="Genomic_DNA"/>
</dbReference>
<dbReference type="RefSeq" id="WP_000240132.1">
    <property type="nucleotide sequence ID" value="NC_012467.1"/>
</dbReference>
<dbReference type="SMR" id="C1CLZ5"/>
<dbReference type="KEGG" id="spp:SPP_1674"/>
<dbReference type="HOGENOM" id="CLU_033323_1_5_9"/>
<dbReference type="UniPathway" id="UPA00109">
    <property type="reaction ID" value="UER00186"/>
</dbReference>
<dbReference type="GO" id="GO:0004619">
    <property type="term" value="F:phosphoglycerate mutase activity"/>
    <property type="evidence" value="ECO:0007669"/>
    <property type="project" value="UniProtKB-EC"/>
</dbReference>
<dbReference type="GO" id="GO:0006094">
    <property type="term" value="P:gluconeogenesis"/>
    <property type="evidence" value="ECO:0007669"/>
    <property type="project" value="UniProtKB-UniRule"/>
</dbReference>
<dbReference type="GO" id="GO:0006096">
    <property type="term" value="P:glycolytic process"/>
    <property type="evidence" value="ECO:0007669"/>
    <property type="project" value="UniProtKB-UniRule"/>
</dbReference>
<dbReference type="CDD" id="cd07067">
    <property type="entry name" value="HP_PGM_like"/>
    <property type="match status" value="1"/>
</dbReference>
<dbReference type="FunFam" id="3.40.50.1240:FF:000003">
    <property type="entry name" value="2,3-bisphosphoglycerate-dependent phosphoglycerate mutase"/>
    <property type="match status" value="1"/>
</dbReference>
<dbReference type="Gene3D" id="3.40.50.1240">
    <property type="entry name" value="Phosphoglycerate mutase-like"/>
    <property type="match status" value="1"/>
</dbReference>
<dbReference type="HAMAP" id="MF_01039">
    <property type="entry name" value="PGAM_GpmA"/>
    <property type="match status" value="1"/>
</dbReference>
<dbReference type="InterPro" id="IPR013078">
    <property type="entry name" value="His_Pase_superF_clade-1"/>
</dbReference>
<dbReference type="InterPro" id="IPR029033">
    <property type="entry name" value="His_PPase_superfam"/>
</dbReference>
<dbReference type="InterPro" id="IPR005952">
    <property type="entry name" value="Phosphogly_mut1"/>
</dbReference>
<dbReference type="NCBIfam" id="TIGR01258">
    <property type="entry name" value="pgm_1"/>
    <property type="match status" value="1"/>
</dbReference>
<dbReference type="NCBIfam" id="NF010713">
    <property type="entry name" value="PRK14115.1"/>
    <property type="match status" value="1"/>
</dbReference>
<dbReference type="NCBIfam" id="NF010715">
    <property type="entry name" value="PRK14117.1"/>
    <property type="match status" value="1"/>
</dbReference>
<dbReference type="PANTHER" id="PTHR11931">
    <property type="entry name" value="PHOSPHOGLYCERATE MUTASE"/>
    <property type="match status" value="1"/>
</dbReference>
<dbReference type="Pfam" id="PF00300">
    <property type="entry name" value="His_Phos_1"/>
    <property type="match status" value="1"/>
</dbReference>
<dbReference type="PIRSF" id="PIRSF000709">
    <property type="entry name" value="6PFK_2-Ptase"/>
    <property type="match status" value="1"/>
</dbReference>
<dbReference type="SMART" id="SM00855">
    <property type="entry name" value="PGAM"/>
    <property type="match status" value="1"/>
</dbReference>
<dbReference type="SUPFAM" id="SSF53254">
    <property type="entry name" value="Phosphoglycerate mutase-like"/>
    <property type="match status" value="1"/>
</dbReference>
<gene>
    <name evidence="1" type="primary">gpmA</name>
    <name type="ordered locus">SPP_1674</name>
</gene>
<name>GPMA_STRZP</name>
<organism>
    <name type="scientific">Streptococcus pneumoniae (strain P1031)</name>
    <dbReference type="NCBI Taxonomy" id="488223"/>
    <lineage>
        <taxon>Bacteria</taxon>
        <taxon>Bacillati</taxon>
        <taxon>Bacillota</taxon>
        <taxon>Bacilli</taxon>
        <taxon>Lactobacillales</taxon>
        <taxon>Streptococcaceae</taxon>
        <taxon>Streptococcus</taxon>
    </lineage>
</organism>
<sequence>MVKLVFARHGESEWNKANLFTGWADVDLSEKGTQQAIDAGKLIKEAGIKFDQAYTSVLKRAIKTTNLALEASDQLWVPVEKSWRLNERHYGGLTGKNKAEAAEQFGDEQVHIWRRSYDVLPPNMDRDDEHSAHTDRRYASLDDSVIPDAENLKVTLERALPFWEDKIAPALKDGKNVFVGAHGNSIRALVKHIKGLSDDEIMDVEIPNFPPLVFEFDEKLNVVSEYYLGK</sequence>
<keyword id="KW-0312">Gluconeogenesis</keyword>
<keyword id="KW-0324">Glycolysis</keyword>
<keyword id="KW-0413">Isomerase</keyword>
<feature type="chain" id="PRO_1000149536" description="2,3-bisphosphoglycerate-dependent phosphoglycerate mutase">
    <location>
        <begin position="1"/>
        <end position="230"/>
    </location>
</feature>
<feature type="active site" description="Tele-phosphohistidine intermediate" evidence="1">
    <location>
        <position position="9"/>
    </location>
</feature>
<feature type="active site" description="Proton donor/acceptor" evidence="1">
    <location>
        <position position="87"/>
    </location>
</feature>
<feature type="binding site" evidence="1">
    <location>
        <begin position="8"/>
        <end position="15"/>
    </location>
    <ligand>
        <name>substrate</name>
    </ligand>
</feature>
<feature type="binding site" evidence="1">
    <location>
        <begin position="21"/>
        <end position="22"/>
    </location>
    <ligand>
        <name>substrate</name>
    </ligand>
</feature>
<feature type="binding site" evidence="1">
    <location>
        <position position="60"/>
    </location>
    <ligand>
        <name>substrate</name>
    </ligand>
</feature>
<feature type="binding site" evidence="1">
    <location>
        <begin position="87"/>
        <end position="90"/>
    </location>
    <ligand>
        <name>substrate</name>
    </ligand>
</feature>
<feature type="binding site" evidence="1">
    <location>
        <position position="98"/>
    </location>
    <ligand>
        <name>substrate</name>
    </ligand>
</feature>
<feature type="binding site" evidence="1">
    <location>
        <begin position="114"/>
        <end position="115"/>
    </location>
    <ligand>
        <name>substrate</name>
    </ligand>
</feature>
<feature type="binding site" evidence="1">
    <location>
        <begin position="183"/>
        <end position="184"/>
    </location>
    <ligand>
        <name>substrate</name>
    </ligand>
</feature>
<feature type="site" description="Transition state stabilizer" evidence="1">
    <location>
        <position position="182"/>
    </location>
</feature>
<accession>C1CLZ5</accession>
<reference key="1">
    <citation type="journal article" date="2010" name="Genome Biol.">
        <title>Structure and dynamics of the pan-genome of Streptococcus pneumoniae and closely related species.</title>
        <authorList>
            <person name="Donati C."/>
            <person name="Hiller N.L."/>
            <person name="Tettelin H."/>
            <person name="Muzzi A."/>
            <person name="Croucher N.J."/>
            <person name="Angiuoli S.V."/>
            <person name="Oggioni M."/>
            <person name="Dunning Hotopp J.C."/>
            <person name="Hu F.Z."/>
            <person name="Riley D.R."/>
            <person name="Covacci A."/>
            <person name="Mitchell T.J."/>
            <person name="Bentley S.D."/>
            <person name="Kilian M."/>
            <person name="Ehrlich G.D."/>
            <person name="Rappuoli R."/>
            <person name="Moxon E.R."/>
            <person name="Masignani V."/>
        </authorList>
    </citation>
    <scope>NUCLEOTIDE SEQUENCE [LARGE SCALE GENOMIC DNA]</scope>
    <source>
        <strain>P1031</strain>
    </source>
</reference>
<comment type="function">
    <text evidence="1">Catalyzes the interconversion of 2-phosphoglycerate and 3-phosphoglycerate.</text>
</comment>
<comment type="catalytic activity">
    <reaction evidence="1">
        <text>(2R)-2-phosphoglycerate = (2R)-3-phosphoglycerate</text>
        <dbReference type="Rhea" id="RHEA:15901"/>
        <dbReference type="ChEBI" id="CHEBI:58272"/>
        <dbReference type="ChEBI" id="CHEBI:58289"/>
        <dbReference type="EC" id="5.4.2.11"/>
    </reaction>
</comment>
<comment type="pathway">
    <text evidence="1">Carbohydrate degradation; glycolysis; pyruvate from D-glyceraldehyde 3-phosphate: step 3/5.</text>
</comment>
<comment type="similarity">
    <text evidence="1">Belongs to the phosphoglycerate mutase family. BPG-dependent PGAM subfamily.</text>
</comment>
<protein>
    <recommendedName>
        <fullName evidence="1">2,3-bisphosphoglycerate-dependent phosphoglycerate mutase</fullName>
        <shortName evidence="1">BPG-dependent PGAM</shortName>
        <shortName evidence="1">PGAM</shortName>
        <shortName evidence="1">Phosphoglyceromutase</shortName>
        <shortName evidence="1">dPGM</shortName>
        <ecNumber evidence="1">5.4.2.11</ecNumber>
    </recommendedName>
</protein>
<evidence type="ECO:0000255" key="1">
    <source>
        <dbReference type="HAMAP-Rule" id="MF_01039"/>
    </source>
</evidence>
<proteinExistence type="inferred from homology"/>